<comment type="function">
    <text evidence="1">May play a role in DNA repair. It seems to be involved in an RecBC-independent recombinational process of DNA repair. It may act with RecF and RecO.</text>
</comment>
<comment type="similarity">
    <text evidence="1">Belongs to the RecR family.</text>
</comment>
<sequence>MKFSPLVQELIDSLKCLPGVGAKSAQRMAFQLLERNRRGGSKLANTLAKAMTDIGHCQQCRNFTEEALCEICQSPKRQLSTTLCIVETPGDVIAIEQTGEFFGKYFVLMGHLSPIDGIGPDDLGLDILAKQFATGQFSEVILATNPTVEGEATAHFIAELAQQHQVNISRIAHGVPVGGELEYVDGNTLSHALSGRKSYQI</sequence>
<gene>
    <name evidence="1" type="primary">recR</name>
    <name type="ordered locus">CPS_3690</name>
</gene>
<reference key="1">
    <citation type="journal article" date="2005" name="Proc. Natl. Acad. Sci. U.S.A.">
        <title>The psychrophilic lifestyle as revealed by the genome sequence of Colwellia psychrerythraea 34H through genomic and proteomic analyses.</title>
        <authorList>
            <person name="Methe B.A."/>
            <person name="Nelson K.E."/>
            <person name="Deming J.W."/>
            <person name="Momen B."/>
            <person name="Melamud E."/>
            <person name="Zhang X."/>
            <person name="Moult J."/>
            <person name="Madupu R."/>
            <person name="Nelson W.C."/>
            <person name="Dodson R.J."/>
            <person name="Brinkac L.M."/>
            <person name="Daugherty S.C."/>
            <person name="Durkin A.S."/>
            <person name="DeBoy R.T."/>
            <person name="Kolonay J.F."/>
            <person name="Sullivan S.A."/>
            <person name="Zhou L."/>
            <person name="Davidsen T.M."/>
            <person name="Wu M."/>
            <person name="Huston A.L."/>
            <person name="Lewis M."/>
            <person name="Weaver B."/>
            <person name="Weidman J.F."/>
            <person name="Khouri H."/>
            <person name="Utterback T.R."/>
            <person name="Feldblyum T.V."/>
            <person name="Fraser C.M."/>
        </authorList>
    </citation>
    <scope>NUCLEOTIDE SEQUENCE [LARGE SCALE GENOMIC DNA]</scope>
    <source>
        <strain>34H / ATCC BAA-681</strain>
    </source>
</reference>
<evidence type="ECO:0000255" key="1">
    <source>
        <dbReference type="HAMAP-Rule" id="MF_00017"/>
    </source>
</evidence>
<organism>
    <name type="scientific">Colwellia psychrerythraea (strain 34H / ATCC BAA-681)</name>
    <name type="common">Vibrio psychroerythus</name>
    <dbReference type="NCBI Taxonomy" id="167879"/>
    <lineage>
        <taxon>Bacteria</taxon>
        <taxon>Pseudomonadati</taxon>
        <taxon>Pseudomonadota</taxon>
        <taxon>Gammaproteobacteria</taxon>
        <taxon>Alteromonadales</taxon>
        <taxon>Colwelliaceae</taxon>
        <taxon>Colwellia</taxon>
    </lineage>
</organism>
<protein>
    <recommendedName>
        <fullName evidence="1">Recombination protein RecR</fullName>
    </recommendedName>
</protein>
<name>RECR_COLP3</name>
<keyword id="KW-0227">DNA damage</keyword>
<keyword id="KW-0233">DNA recombination</keyword>
<keyword id="KW-0234">DNA repair</keyword>
<keyword id="KW-0479">Metal-binding</keyword>
<keyword id="KW-0862">Zinc</keyword>
<keyword id="KW-0863">Zinc-finger</keyword>
<accession>Q47XW2</accession>
<dbReference type="EMBL" id="CP000083">
    <property type="protein sequence ID" value="AAZ24710.1"/>
    <property type="molecule type" value="Genomic_DNA"/>
</dbReference>
<dbReference type="RefSeq" id="WP_011044444.1">
    <property type="nucleotide sequence ID" value="NC_003910.7"/>
</dbReference>
<dbReference type="SMR" id="Q47XW2"/>
<dbReference type="STRING" id="167879.CPS_3690"/>
<dbReference type="KEGG" id="cps:CPS_3690"/>
<dbReference type="eggNOG" id="COG0353">
    <property type="taxonomic scope" value="Bacteria"/>
</dbReference>
<dbReference type="HOGENOM" id="CLU_060739_1_2_6"/>
<dbReference type="Proteomes" id="UP000000547">
    <property type="component" value="Chromosome"/>
</dbReference>
<dbReference type="GO" id="GO:0003677">
    <property type="term" value="F:DNA binding"/>
    <property type="evidence" value="ECO:0007669"/>
    <property type="project" value="UniProtKB-UniRule"/>
</dbReference>
<dbReference type="GO" id="GO:0008270">
    <property type="term" value="F:zinc ion binding"/>
    <property type="evidence" value="ECO:0007669"/>
    <property type="project" value="UniProtKB-KW"/>
</dbReference>
<dbReference type="GO" id="GO:0006310">
    <property type="term" value="P:DNA recombination"/>
    <property type="evidence" value="ECO:0007669"/>
    <property type="project" value="UniProtKB-UniRule"/>
</dbReference>
<dbReference type="GO" id="GO:0006281">
    <property type="term" value="P:DNA repair"/>
    <property type="evidence" value="ECO:0007669"/>
    <property type="project" value="UniProtKB-UniRule"/>
</dbReference>
<dbReference type="CDD" id="cd01025">
    <property type="entry name" value="TOPRIM_recR"/>
    <property type="match status" value="1"/>
</dbReference>
<dbReference type="FunFam" id="3.40.1360.10:FF:000001">
    <property type="entry name" value="Recombination protein RecR"/>
    <property type="match status" value="1"/>
</dbReference>
<dbReference type="Gene3D" id="3.40.1360.10">
    <property type="match status" value="1"/>
</dbReference>
<dbReference type="Gene3D" id="6.10.250.240">
    <property type="match status" value="1"/>
</dbReference>
<dbReference type="Gene3D" id="1.10.8.420">
    <property type="entry name" value="RecR Domain 1"/>
    <property type="match status" value="1"/>
</dbReference>
<dbReference type="HAMAP" id="MF_00017">
    <property type="entry name" value="RecR"/>
    <property type="match status" value="1"/>
</dbReference>
<dbReference type="InterPro" id="IPR000093">
    <property type="entry name" value="DNA_Rcmb_RecR"/>
</dbReference>
<dbReference type="InterPro" id="IPR023627">
    <property type="entry name" value="Rcmb_RecR"/>
</dbReference>
<dbReference type="InterPro" id="IPR015967">
    <property type="entry name" value="Rcmb_RecR_Znf"/>
</dbReference>
<dbReference type="InterPro" id="IPR006171">
    <property type="entry name" value="TOPRIM_dom"/>
</dbReference>
<dbReference type="InterPro" id="IPR034137">
    <property type="entry name" value="TOPRIM_RecR"/>
</dbReference>
<dbReference type="NCBIfam" id="TIGR00615">
    <property type="entry name" value="recR"/>
    <property type="match status" value="1"/>
</dbReference>
<dbReference type="PANTHER" id="PTHR30446">
    <property type="entry name" value="RECOMBINATION PROTEIN RECR"/>
    <property type="match status" value="1"/>
</dbReference>
<dbReference type="PANTHER" id="PTHR30446:SF0">
    <property type="entry name" value="RECOMBINATION PROTEIN RECR"/>
    <property type="match status" value="1"/>
</dbReference>
<dbReference type="Pfam" id="PF21175">
    <property type="entry name" value="RecR_C"/>
    <property type="match status" value="1"/>
</dbReference>
<dbReference type="Pfam" id="PF21176">
    <property type="entry name" value="RecR_HhH"/>
    <property type="match status" value="1"/>
</dbReference>
<dbReference type="Pfam" id="PF02132">
    <property type="entry name" value="RecR_ZnF"/>
    <property type="match status" value="1"/>
</dbReference>
<dbReference type="Pfam" id="PF13662">
    <property type="entry name" value="Toprim_4"/>
    <property type="match status" value="1"/>
</dbReference>
<dbReference type="SMART" id="SM00493">
    <property type="entry name" value="TOPRIM"/>
    <property type="match status" value="1"/>
</dbReference>
<dbReference type="SUPFAM" id="SSF111304">
    <property type="entry name" value="Recombination protein RecR"/>
    <property type="match status" value="1"/>
</dbReference>
<dbReference type="PROSITE" id="PS01300">
    <property type="entry name" value="RECR"/>
    <property type="match status" value="1"/>
</dbReference>
<dbReference type="PROSITE" id="PS50880">
    <property type="entry name" value="TOPRIM"/>
    <property type="match status" value="1"/>
</dbReference>
<feature type="chain" id="PRO_1000001533" description="Recombination protein RecR">
    <location>
        <begin position="1"/>
        <end position="201"/>
    </location>
</feature>
<feature type="domain" description="Toprim" evidence="1">
    <location>
        <begin position="81"/>
        <end position="176"/>
    </location>
</feature>
<feature type="zinc finger region" description="C4-type" evidence="1">
    <location>
        <begin position="57"/>
        <end position="72"/>
    </location>
</feature>
<proteinExistence type="inferred from homology"/>